<evidence type="ECO:0000255" key="1">
    <source>
        <dbReference type="HAMAP-Rule" id="MF_01832"/>
    </source>
</evidence>
<keyword id="KW-0963">Cytoplasm</keyword>
<dbReference type="EMBL" id="AM286415">
    <property type="protein sequence ID" value="CAL12237.1"/>
    <property type="molecule type" value="Genomic_DNA"/>
</dbReference>
<dbReference type="RefSeq" id="WP_011816383.1">
    <property type="nucleotide sequence ID" value="NC_008800.1"/>
</dbReference>
<dbReference type="RefSeq" id="YP_001006407.1">
    <property type="nucleotide sequence ID" value="NC_008800.1"/>
</dbReference>
<dbReference type="SMR" id="A1JPC1"/>
<dbReference type="KEGG" id="yen:YE2167"/>
<dbReference type="PATRIC" id="fig|393305.7.peg.2332"/>
<dbReference type="eggNOG" id="COG2166">
    <property type="taxonomic scope" value="Bacteria"/>
</dbReference>
<dbReference type="HOGENOM" id="CLU_124502_1_1_6"/>
<dbReference type="OrthoDB" id="9799320at2"/>
<dbReference type="UniPathway" id="UPA00266"/>
<dbReference type="Proteomes" id="UP000000642">
    <property type="component" value="Chromosome"/>
</dbReference>
<dbReference type="GO" id="GO:0005737">
    <property type="term" value="C:cytoplasm"/>
    <property type="evidence" value="ECO:0007669"/>
    <property type="project" value="UniProtKB-SubCell"/>
</dbReference>
<dbReference type="GO" id="GO:0016226">
    <property type="term" value="P:iron-sulfur cluster assembly"/>
    <property type="evidence" value="ECO:0007669"/>
    <property type="project" value="InterPro"/>
</dbReference>
<dbReference type="GO" id="GO:0006790">
    <property type="term" value="P:sulfur compound metabolic process"/>
    <property type="evidence" value="ECO:0007669"/>
    <property type="project" value="InterPro"/>
</dbReference>
<dbReference type="Gene3D" id="3.90.1010.10">
    <property type="match status" value="1"/>
</dbReference>
<dbReference type="HAMAP" id="MF_01832">
    <property type="entry name" value="SufE"/>
    <property type="match status" value="1"/>
</dbReference>
<dbReference type="InterPro" id="IPR023939">
    <property type="entry name" value="Cysteine_desulfuration_SufE"/>
</dbReference>
<dbReference type="InterPro" id="IPR003808">
    <property type="entry name" value="Fe-S_metab-assoc_dom"/>
</dbReference>
<dbReference type="NCBIfam" id="NF006792">
    <property type="entry name" value="PRK09296.1"/>
    <property type="match status" value="1"/>
</dbReference>
<dbReference type="PANTHER" id="PTHR43597:SF3">
    <property type="entry name" value="CYSTEINE DESULFURATION PROTEIN SUFE"/>
    <property type="match status" value="1"/>
</dbReference>
<dbReference type="PANTHER" id="PTHR43597">
    <property type="entry name" value="SULFUR ACCEPTOR PROTEIN CSDE"/>
    <property type="match status" value="1"/>
</dbReference>
<dbReference type="Pfam" id="PF02657">
    <property type="entry name" value="SufE"/>
    <property type="match status" value="1"/>
</dbReference>
<dbReference type="SUPFAM" id="SSF82649">
    <property type="entry name" value="SufE/NifU"/>
    <property type="match status" value="1"/>
</dbReference>
<proteinExistence type="inferred from homology"/>
<accession>A1JPC1</accession>
<name>SUFE_YERE8</name>
<gene>
    <name evidence="1" type="primary">sufE</name>
    <name type="ordered locus">YE2167</name>
</gene>
<protein>
    <recommendedName>
        <fullName evidence="1">Cysteine desulfuration protein SufE</fullName>
    </recommendedName>
</protein>
<reference key="1">
    <citation type="journal article" date="2006" name="PLoS Genet.">
        <title>The complete genome sequence and comparative genome analysis of the high pathogenicity Yersinia enterocolitica strain 8081.</title>
        <authorList>
            <person name="Thomson N.R."/>
            <person name="Howard S."/>
            <person name="Wren B.W."/>
            <person name="Holden M.T.G."/>
            <person name="Crossman L."/>
            <person name="Challis G.L."/>
            <person name="Churcher C."/>
            <person name="Mungall K."/>
            <person name="Brooks K."/>
            <person name="Chillingworth T."/>
            <person name="Feltwell T."/>
            <person name="Abdellah Z."/>
            <person name="Hauser H."/>
            <person name="Jagels K."/>
            <person name="Maddison M."/>
            <person name="Moule S."/>
            <person name="Sanders M."/>
            <person name="Whitehead S."/>
            <person name="Quail M.A."/>
            <person name="Dougan G."/>
            <person name="Parkhill J."/>
            <person name="Prentice M.B."/>
        </authorList>
    </citation>
    <scope>NUCLEOTIDE SEQUENCE [LARGE SCALE GENOMIC DNA]</scope>
    <source>
        <strain>NCTC 13174 / 8081</strain>
    </source>
</reference>
<comment type="function">
    <text evidence="1">Participates in cysteine desulfuration mediated by SufS. Cysteine desulfuration mobilizes sulfur from L-cysteine to yield L-alanine and constitutes an essential step in sulfur metabolism for biosynthesis of a variety of sulfur-containing biomolecules. Functions as a sulfur acceptor for SufS, by mediating the direct transfer of the sulfur atom from the S-sulfanylcysteine of SufS, an intermediate product of cysteine desulfuration process.</text>
</comment>
<comment type="pathway">
    <text evidence="1">Cofactor biosynthesis; iron-sulfur cluster biosynthesis.</text>
</comment>
<comment type="subunit">
    <text evidence="1">Homodimer. Interacts with SufS.</text>
</comment>
<comment type="subcellular location">
    <subcellularLocation>
        <location evidence="1">Cytoplasm</location>
    </subcellularLocation>
</comment>
<comment type="similarity">
    <text evidence="1">Belongs to the SufE family.</text>
</comment>
<sequence>MAGLPDKDKLIRNFSRCLNWEEKYLYVIELGAQLPPLTEQQRQPDNLISGCQSQVWIAMSTSTEGQVVFAGDSDAAIVKGLVVVVFILYQGLTPQQIIDLDVRPFFADLALSQHLTPSRSQGLEAMIRAIRAKAAVLKAG</sequence>
<organism>
    <name type="scientific">Yersinia enterocolitica serotype O:8 / biotype 1B (strain NCTC 13174 / 8081)</name>
    <dbReference type="NCBI Taxonomy" id="393305"/>
    <lineage>
        <taxon>Bacteria</taxon>
        <taxon>Pseudomonadati</taxon>
        <taxon>Pseudomonadota</taxon>
        <taxon>Gammaproteobacteria</taxon>
        <taxon>Enterobacterales</taxon>
        <taxon>Yersiniaceae</taxon>
        <taxon>Yersinia</taxon>
    </lineage>
</organism>
<feature type="chain" id="PRO_1000070451" description="Cysteine desulfuration protein SufE">
    <location>
        <begin position="1"/>
        <end position="140"/>
    </location>
</feature>
<feature type="active site" description="Cysteine persulfide intermediate" evidence="1">
    <location>
        <position position="51"/>
    </location>
</feature>